<accession>Q8K910</accession>
<name>G6PI_BUCAP</name>
<comment type="function">
    <text evidence="1">Catalyzes the reversible isomerization of glucose-6-phosphate to fructose-6-phosphate.</text>
</comment>
<comment type="catalytic activity">
    <reaction evidence="1">
        <text>alpha-D-glucose 6-phosphate = beta-D-fructose 6-phosphate</text>
        <dbReference type="Rhea" id="RHEA:11816"/>
        <dbReference type="ChEBI" id="CHEBI:57634"/>
        <dbReference type="ChEBI" id="CHEBI:58225"/>
        <dbReference type="EC" id="5.3.1.9"/>
    </reaction>
</comment>
<comment type="pathway">
    <text evidence="1">Carbohydrate biosynthesis; gluconeogenesis.</text>
</comment>
<comment type="pathway">
    <text evidence="1">Carbohydrate degradation; glycolysis; D-glyceraldehyde 3-phosphate and glycerone phosphate from D-glucose: step 2/4.</text>
</comment>
<comment type="subcellular location">
    <subcellularLocation>
        <location evidence="1">Cytoplasm</location>
    </subcellularLocation>
</comment>
<comment type="similarity">
    <text evidence="1">Belongs to the GPI family.</text>
</comment>
<evidence type="ECO:0000255" key="1">
    <source>
        <dbReference type="HAMAP-Rule" id="MF_00473"/>
    </source>
</evidence>
<proteinExistence type="inferred from homology"/>
<dbReference type="EC" id="5.3.1.9" evidence="1"/>
<dbReference type="EMBL" id="AE013218">
    <property type="protein sequence ID" value="AAM68091.1"/>
    <property type="molecule type" value="Genomic_DNA"/>
</dbReference>
<dbReference type="RefSeq" id="WP_011054057.1">
    <property type="nucleotide sequence ID" value="NC_004061.1"/>
</dbReference>
<dbReference type="SMR" id="Q8K910"/>
<dbReference type="STRING" id="198804.BUsg_553"/>
<dbReference type="GeneID" id="93004030"/>
<dbReference type="KEGG" id="bas:BUsg_553"/>
<dbReference type="eggNOG" id="COG0166">
    <property type="taxonomic scope" value="Bacteria"/>
</dbReference>
<dbReference type="HOGENOM" id="CLU_017947_3_1_6"/>
<dbReference type="UniPathway" id="UPA00109">
    <property type="reaction ID" value="UER00181"/>
</dbReference>
<dbReference type="UniPathway" id="UPA00138"/>
<dbReference type="Proteomes" id="UP000000416">
    <property type="component" value="Chromosome"/>
</dbReference>
<dbReference type="GO" id="GO:0005829">
    <property type="term" value="C:cytosol"/>
    <property type="evidence" value="ECO:0007669"/>
    <property type="project" value="TreeGrafter"/>
</dbReference>
<dbReference type="GO" id="GO:0097367">
    <property type="term" value="F:carbohydrate derivative binding"/>
    <property type="evidence" value="ECO:0007669"/>
    <property type="project" value="InterPro"/>
</dbReference>
<dbReference type="GO" id="GO:0004347">
    <property type="term" value="F:glucose-6-phosphate isomerase activity"/>
    <property type="evidence" value="ECO:0007669"/>
    <property type="project" value="UniProtKB-UniRule"/>
</dbReference>
<dbReference type="GO" id="GO:0048029">
    <property type="term" value="F:monosaccharide binding"/>
    <property type="evidence" value="ECO:0007669"/>
    <property type="project" value="TreeGrafter"/>
</dbReference>
<dbReference type="GO" id="GO:0006094">
    <property type="term" value="P:gluconeogenesis"/>
    <property type="evidence" value="ECO:0007669"/>
    <property type="project" value="UniProtKB-UniRule"/>
</dbReference>
<dbReference type="GO" id="GO:0051156">
    <property type="term" value="P:glucose 6-phosphate metabolic process"/>
    <property type="evidence" value="ECO:0007669"/>
    <property type="project" value="TreeGrafter"/>
</dbReference>
<dbReference type="GO" id="GO:0006096">
    <property type="term" value="P:glycolytic process"/>
    <property type="evidence" value="ECO:0007669"/>
    <property type="project" value="UniProtKB-UniRule"/>
</dbReference>
<dbReference type="CDD" id="cd05015">
    <property type="entry name" value="SIS_PGI_1"/>
    <property type="match status" value="1"/>
</dbReference>
<dbReference type="CDD" id="cd05016">
    <property type="entry name" value="SIS_PGI_2"/>
    <property type="match status" value="1"/>
</dbReference>
<dbReference type="FunFam" id="3.40.50.10490:FF:000004">
    <property type="entry name" value="Glucose-6-phosphate isomerase"/>
    <property type="match status" value="1"/>
</dbReference>
<dbReference type="Gene3D" id="1.10.1390.10">
    <property type="match status" value="1"/>
</dbReference>
<dbReference type="Gene3D" id="3.40.50.10490">
    <property type="entry name" value="Glucose-6-phosphate isomerase like protein, domain 1"/>
    <property type="match status" value="2"/>
</dbReference>
<dbReference type="HAMAP" id="MF_00473">
    <property type="entry name" value="G6P_isomerase"/>
    <property type="match status" value="1"/>
</dbReference>
<dbReference type="InterPro" id="IPR001672">
    <property type="entry name" value="G6P_Isomerase"/>
</dbReference>
<dbReference type="InterPro" id="IPR023096">
    <property type="entry name" value="G6P_Isomerase_C"/>
</dbReference>
<dbReference type="InterPro" id="IPR018189">
    <property type="entry name" value="Phosphoglucose_isomerase_CS"/>
</dbReference>
<dbReference type="InterPro" id="IPR046348">
    <property type="entry name" value="SIS_dom_sf"/>
</dbReference>
<dbReference type="InterPro" id="IPR035476">
    <property type="entry name" value="SIS_PGI_1"/>
</dbReference>
<dbReference type="InterPro" id="IPR035482">
    <property type="entry name" value="SIS_PGI_2"/>
</dbReference>
<dbReference type="NCBIfam" id="NF001211">
    <property type="entry name" value="PRK00179.1"/>
    <property type="match status" value="1"/>
</dbReference>
<dbReference type="PANTHER" id="PTHR11469">
    <property type="entry name" value="GLUCOSE-6-PHOSPHATE ISOMERASE"/>
    <property type="match status" value="1"/>
</dbReference>
<dbReference type="PANTHER" id="PTHR11469:SF1">
    <property type="entry name" value="GLUCOSE-6-PHOSPHATE ISOMERASE"/>
    <property type="match status" value="1"/>
</dbReference>
<dbReference type="Pfam" id="PF00342">
    <property type="entry name" value="PGI"/>
    <property type="match status" value="1"/>
</dbReference>
<dbReference type="PRINTS" id="PR00662">
    <property type="entry name" value="G6PISOMERASE"/>
</dbReference>
<dbReference type="SUPFAM" id="SSF53697">
    <property type="entry name" value="SIS domain"/>
    <property type="match status" value="1"/>
</dbReference>
<dbReference type="PROSITE" id="PS00765">
    <property type="entry name" value="P_GLUCOSE_ISOMERASE_1"/>
    <property type="match status" value="1"/>
</dbReference>
<dbReference type="PROSITE" id="PS00174">
    <property type="entry name" value="P_GLUCOSE_ISOMERASE_2"/>
    <property type="match status" value="1"/>
</dbReference>
<dbReference type="PROSITE" id="PS51463">
    <property type="entry name" value="P_GLUCOSE_ISOMERASE_3"/>
    <property type="match status" value="1"/>
</dbReference>
<feature type="chain" id="PRO_0000180613" description="Glucose-6-phosphate isomerase">
    <location>
        <begin position="1"/>
        <end position="555"/>
    </location>
</feature>
<feature type="active site" description="Proton donor" evidence="1">
    <location>
        <position position="355"/>
    </location>
</feature>
<feature type="active site" evidence="1">
    <location>
        <position position="386"/>
    </location>
</feature>
<feature type="active site" evidence="1">
    <location>
        <position position="514"/>
    </location>
</feature>
<protein>
    <recommendedName>
        <fullName evidence="1">Glucose-6-phosphate isomerase</fullName>
        <shortName evidence="1">GPI</shortName>
        <ecNumber evidence="1">5.3.1.9</ecNumber>
    </recommendedName>
    <alternativeName>
        <fullName evidence="1">Phosphoglucose isomerase</fullName>
        <shortName evidence="1">PGI</shortName>
    </alternativeName>
    <alternativeName>
        <fullName evidence="1">Phosphohexose isomerase</fullName>
        <shortName evidence="1">PHI</shortName>
    </alternativeName>
</protein>
<organism>
    <name type="scientific">Buchnera aphidicola subsp. Schizaphis graminum (strain Sg)</name>
    <dbReference type="NCBI Taxonomy" id="198804"/>
    <lineage>
        <taxon>Bacteria</taxon>
        <taxon>Pseudomonadati</taxon>
        <taxon>Pseudomonadota</taxon>
        <taxon>Gammaproteobacteria</taxon>
        <taxon>Enterobacterales</taxon>
        <taxon>Erwiniaceae</taxon>
        <taxon>Buchnera</taxon>
    </lineage>
</organism>
<keyword id="KW-0963">Cytoplasm</keyword>
<keyword id="KW-0312">Gluconeogenesis</keyword>
<keyword id="KW-0324">Glycolysis</keyword>
<keyword id="KW-0413">Isomerase</keyword>
<gene>
    <name evidence="1" type="primary">pgi</name>
    <name type="ordered locus">BUsg_553</name>
</gene>
<reference key="1">
    <citation type="journal article" date="2002" name="Science">
        <title>50 million years of genomic stasis in endosymbiotic bacteria.</title>
        <authorList>
            <person name="Tamas I."/>
            <person name="Klasson L."/>
            <person name="Canbaeck B."/>
            <person name="Naeslund A.K."/>
            <person name="Eriksson A.-S."/>
            <person name="Wernegreen J.J."/>
            <person name="Sandstroem J.P."/>
            <person name="Moran N.A."/>
            <person name="Andersson S.G.E."/>
        </authorList>
    </citation>
    <scope>NUCLEOTIDE SEQUENCE [LARGE SCALE GENOMIC DNA]</scope>
    <source>
        <strain>Sg</strain>
    </source>
</reference>
<sequence length="555" mass="63957">MKNINLIETKSWKDLKNHFKEVKNIHLKDLFLSDFNRFKKFSIFFENEILIDFSKNRITEKTLILLLNLAKEMNVKSAIKLMFSGSKINQTENRSVLHIALRNRSNFPILLNNSDIMSEVNDVLKKMKNFSELVIDGTWKGYSGKSISDVVNIGIGGSDLGPYMVTEALRPYKNHLNIHYVSNIDGTHLSEILKKINPETTIFLIASKTFTTDETITNANSAKFWFLKHSKTKETLDKHFFALSANINNAVNFGINIKNIFQFWDWVGGRFSLWSSAGLSIVLSIGFNNFEKFLQGAHVMDNHFYHTEYDKNIPILLALISIWYTNFFNSETEAIFPYDQYMHRFSAYFQQSNMESNGKSIDKNGNKVCYQTGPIIWGEPGTNGQHAFFQLIHQGTKLIPSDFIVPTVSHNNLNDHHLKLISNFLAQTQVLAFGKSKNSFLKESTSFKKEEDEFNRILPFKICEGNKPTNSILLRKITPYTLGMLIALYEHKIFVQGHILNIFSFDQWGVEIGKEVAQSIYKNINEKTKNSKSYDSSTQGLIDFYNFFKNKQNYL</sequence>